<feature type="chain" id="PRO_0000362349" description="ATP synthase subunit a">
    <location>
        <begin position="1"/>
        <end position="249"/>
    </location>
</feature>
<feature type="transmembrane region" description="Helical" evidence="1">
    <location>
        <begin position="33"/>
        <end position="53"/>
    </location>
</feature>
<feature type="transmembrane region" description="Helical" evidence="1">
    <location>
        <begin position="92"/>
        <end position="112"/>
    </location>
</feature>
<feature type="transmembrane region" description="Helical" evidence="1">
    <location>
        <begin position="131"/>
        <end position="151"/>
    </location>
</feature>
<feature type="transmembrane region" description="Helical" evidence="1">
    <location>
        <begin position="196"/>
        <end position="216"/>
    </location>
</feature>
<feature type="transmembrane region" description="Helical" evidence="1">
    <location>
        <begin position="217"/>
        <end position="237"/>
    </location>
</feature>
<evidence type="ECO:0000255" key="1">
    <source>
        <dbReference type="HAMAP-Rule" id="MF_01393"/>
    </source>
</evidence>
<sequence length="249" mass="27687">MLDSLSVLNFYSLASLEVGQHWYWHIGGLKIHGQVIAVSWIVFAILIIASIAATRKIQKVPSGIQNLMEYVLEFLRDLAKNQLGEKEYRPWLPFIGTLFLFIFVSNWLGALIPWKLIELPEGELAAPTNDINTTVALALLTSLAYFYAGISKKGLGYFAHYLEPIPVLLPIKILEDFTKPLSLSFRLFGNILADELVVAVLVFLVPLVVPLPLMALGLFTSAIQALVFATLAGAYIHEALESEHEEEHA</sequence>
<name>ATP6_MICAN</name>
<organism>
    <name type="scientific">Microcystis aeruginosa (strain NIES-843 / IAM M-2473)</name>
    <dbReference type="NCBI Taxonomy" id="449447"/>
    <lineage>
        <taxon>Bacteria</taxon>
        <taxon>Bacillati</taxon>
        <taxon>Cyanobacteriota</taxon>
        <taxon>Cyanophyceae</taxon>
        <taxon>Oscillatoriophycideae</taxon>
        <taxon>Chroococcales</taxon>
        <taxon>Microcystaceae</taxon>
        <taxon>Microcystis</taxon>
    </lineage>
</organism>
<protein>
    <recommendedName>
        <fullName evidence="1">ATP synthase subunit a</fullName>
    </recommendedName>
    <alternativeName>
        <fullName evidence="1">ATP synthase F0 sector subunit a</fullName>
    </alternativeName>
    <alternativeName>
        <fullName evidence="1">F-ATPase subunit 6</fullName>
    </alternativeName>
</protein>
<keyword id="KW-0066">ATP synthesis</keyword>
<keyword id="KW-0138">CF(0)</keyword>
<keyword id="KW-0375">Hydrogen ion transport</keyword>
<keyword id="KW-0406">Ion transport</keyword>
<keyword id="KW-0472">Membrane</keyword>
<keyword id="KW-0793">Thylakoid</keyword>
<keyword id="KW-0812">Transmembrane</keyword>
<keyword id="KW-1133">Transmembrane helix</keyword>
<keyword id="KW-0813">Transport</keyword>
<accession>B0JWU6</accession>
<gene>
    <name evidence="1" type="primary">atpB</name>
    <name evidence="1" type="synonym">atpI</name>
    <name type="ordered locus">MAE_50110</name>
</gene>
<dbReference type="EMBL" id="AP009552">
    <property type="protein sequence ID" value="BAG04833.1"/>
    <property type="molecule type" value="Genomic_DNA"/>
</dbReference>
<dbReference type="RefSeq" id="WP_002739857.1">
    <property type="nucleotide sequence ID" value="NC_010296.1"/>
</dbReference>
<dbReference type="SMR" id="B0JWU6"/>
<dbReference type="STRING" id="449447.MAE_50110"/>
<dbReference type="PaxDb" id="449447-MAE_50110"/>
<dbReference type="EnsemblBacteria" id="BAG04833">
    <property type="protein sequence ID" value="BAG04833"/>
    <property type="gene ID" value="MAE_50110"/>
</dbReference>
<dbReference type="GeneID" id="66707684"/>
<dbReference type="KEGG" id="mar:MAE_50110"/>
<dbReference type="eggNOG" id="COG0356">
    <property type="taxonomic scope" value="Bacteria"/>
</dbReference>
<dbReference type="HOGENOM" id="CLU_041018_2_4_3"/>
<dbReference type="BioCyc" id="MAER449447:MAE_RS21745-MONOMER"/>
<dbReference type="Proteomes" id="UP000001510">
    <property type="component" value="Chromosome"/>
</dbReference>
<dbReference type="GO" id="GO:0031676">
    <property type="term" value="C:plasma membrane-derived thylakoid membrane"/>
    <property type="evidence" value="ECO:0007669"/>
    <property type="project" value="UniProtKB-SubCell"/>
</dbReference>
<dbReference type="GO" id="GO:0045259">
    <property type="term" value="C:proton-transporting ATP synthase complex"/>
    <property type="evidence" value="ECO:0007669"/>
    <property type="project" value="UniProtKB-KW"/>
</dbReference>
<dbReference type="GO" id="GO:0046933">
    <property type="term" value="F:proton-transporting ATP synthase activity, rotational mechanism"/>
    <property type="evidence" value="ECO:0007669"/>
    <property type="project" value="UniProtKB-UniRule"/>
</dbReference>
<dbReference type="CDD" id="cd00310">
    <property type="entry name" value="ATP-synt_Fo_a_6"/>
    <property type="match status" value="1"/>
</dbReference>
<dbReference type="FunFam" id="1.20.120.220:FF:000001">
    <property type="entry name" value="ATP synthase subunit a, chloroplastic"/>
    <property type="match status" value="1"/>
</dbReference>
<dbReference type="Gene3D" id="1.20.120.220">
    <property type="entry name" value="ATP synthase, F0 complex, subunit A"/>
    <property type="match status" value="1"/>
</dbReference>
<dbReference type="HAMAP" id="MF_01393">
    <property type="entry name" value="ATP_synth_a_bact"/>
    <property type="match status" value="1"/>
</dbReference>
<dbReference type="InterPro" id="IPR045082">
    <property type="entry name" value="ATP_syn_F0_a_bact/chloroplast"/>
</dbReference>
<dbReference type="InterPro" id="IPR000568">
    <property type="entry name" value="ATP_synth_F0_asu"/>
</dbReference>
<dbReference type="InterPro" id="IPR023011">
    <property type="entry name" value="ATP_synth_F0_asu_AS"/>
</dbReference>
<dbReference type="InterPro" id="IPR035908">
    <property type="entry name" value="F0_ATP_A_sf"/>
</dbReference>
<dbReference type="NCBIfam" id="TIGR01131">
    <property type="entry name" value="ATP_synt_6_or_A"/>
    <property type="match status" value="1"/>
</dbReference>
<dbReference type="PANTHER" id="PTHR42823">
    <property type="entry name" value="ATP SYNTHASE SUBUNIT A, CHLOROPLASTIC"/>
    <property type="match status" value="1"/>
</dbReference>
<dbReference type="PANTHER" id="PTHR42823:SF3">
    <property type="entry name" value="ATP SYNTHASE SUBUNIT A, CHLOROPLASTIC"/>
    <property type="match status" value="1"/>
</dbReference>
<dbReference type="Pfam" id="PF00119">
    <property type="entry name" value="ATP-synt_A"/>
    <property type="match status" value="1"/>
</dbReference>
<dbReference type="PRINTS" id="PR00123">
    <property type="entry name" value="ATPASEA"/>
</dbReference>
<dbReference type="SUPFAM" id="SSF81336">
    <property type="entry name" value="F1F0 ATP synthase subunit A"/>
    <property type="match status" value="1"/>
</dbReference>
<dbReference type="PROSITE" id="PS00449">
    <property type="entry name" value="ATPASE_A"/>
    <property type="match status" value="1"/>
</dbReference>
<proteinExistence type="inferred from homology"/>
<reference key="1">
    <citation type="journal article" date="2007" name="DNA Res.">
        <title>Complete genomic structure of the bloom-forming toxic cyanobacterium Microcystis aeruginosa NIES-843.</title>
        <authorList>
            <person name="Kaneko T."/>
            <person name="Nakajima N."/>
            <person name="Okamoto S."/>
            <person name="Suzuki I."/>
            <person name="Tanabe Y."/>
            <person name="Tamaoki M."/>
            <person name="Nakamura Y."/>
            <person name="Kasai F."/>
            <person name="Watanabe A."/>
            <person name="Kawashima K."/>
            <person name="Kishida Y."/>
            <person name="Ono A."/>
            <person name="Shimizu Y."/>
            <person name="Takahashi C."/>
            <person name="Minami C."/>
            <person name="Fujishiro T."/>
            <person name="Kohara M."/>
            <person name="Katoh M."/>
            <person name="Nakazaki N."/>
            <person name="Nakayama S."/>
            <person name="Yamada M."/>
            <person name="Tabata S."/>
            <person name="Watanabe M.M."/>
        </authorList>
    </citation>
    <scope>NUCLEOTIDE SEQUENCE [LARGE SCALE GENOMIC DNA]</scope>
    <source>
        <strain>NIES-843 / IAM M-247</strain>
    </source>
</reference>
<comment type="function">
    <text evidence="1">Key component of the proton channel; it plays a direct role in the translocation of protons across the membrane.</text>
</comment>
<comment type="subunit">
    <text evidence="1">F-type ATPases have 2 components, CF(1) - the catalytic core - and CF(0) - the membrane proton channel. CF(1) has five subunits: alpha(3), beta(3), gamma(1), delta(1), epsilon(1). CF(0) has four main subunits: a, b, b' and c.</text>
</comment>
<comment type="subcellular location">
    <subcellularLocation>
        <location evidence="1">Cellular thylakoid membrane</location>
        <topology evidence="1">Multi-pass membrane protein</topology>
    </subcellularLocation>
</comment>
<comment type="similarity">
    <text evidence="1">Belongs to the ATPase A chain family.</text>
</comment>